<proteinExistence type="inferred from homology"/>
<feature type="chain" id="PRO_1000050901" description="D-aminoacyl-tRNA deacylase">
    <location>
        <begin position="1"/>
        <end position="150"/>
    </location>
</feature>
<feature type="short sequence motif" description="Gly-cisPro motif, important for rejection of L-amino acids" evidence="1">
    <location>
        <begin position="138"/>
        <end position="139"/>
    </location>
</feature>
<name>DTD_THEM4</name>
<organism>
    <name type="scientific">Thermosipho melanesiensis (strain DSM 12029 / CIP 104789 / BI429)</name>
    <dbReference type="NCBI Taxonomy" id="391009"/>
    <lineage>
        <taxon>Bacteria</taxon>
        <taxon>Thermotogati</taxon>
        <taxon>Thermotogota</taxon>
        <taxon>Thermotogae</taxon>
        <taxon>Thermotogales</taxon>
        <taxon>Fervidobacteriaceae</taxon>
        <taxon>Thermosipho</taxon>
    </lineage>
</organism>
<evidence type="ECO:0000255" key="1">
    <source>
        <dbReference type="HAMAP-Rule" id="MF_00518"/>
    </source>
</evidence>
<gene>
    <name evidence="1" type="primary">dtd</name>
    <name type="ordered locus">Tmel_1315</name>
</gene>
<accession>A6LML3</accession>
<protein>
    <recommendedName>
        <fullName evidence="1">D-aminoacyl-tRNA deacylase</fullName>
        <shortName evidence="1">DTD</shortName>
        <ecNumber evidence="1">3.1.1.96</ecNumber>
    </recommendedName>
    <alternativeName>
        <fullName evidence="1">Gly-tRNA(Ala) deacylase</fullName>
    </alternativeName>
</protein>
<dbReference type="EC" id="3.1.1.96" evidence="1"/>
<dbReference type="EMBL" id="CP000716">
    <property type="protein sequence ID" value="ABR31164.1"/>
    <property type="molecule type" value="Genomic_DNA"/>
</dbReference>
<dbReference type="RefSeq" id="WP_012057523.1">
    <property type="nucleotide sequence ID" value="NC_009616.1"/>
</dbReference>
<dbReference type="SMR" id="A6LML3"/>
<dbReference type="STRING" id="391009.Tmel_1315"/>
<dbReference type="KEGG" id="tme:Tmel_1315"/>
<dbReference type="eggNOG" id="COG1490">
    <property type="taxonomic scope" value="Bacteria"/>
</dbReference>
<dbReference type="HOGENOM" id="CLU_076901_1_0_0"/>
<dbReference type="OrthoDB" id="9801395at2"/>
<dbReference type="Proteomes" id="UP000001110">
    <property type="component" value="Chromosome"/>
</dbReference>
<dbReference type="GO" id="GO:0005737">
    <property type="term" value="C:cytoplasm"/>
    <property type="evidence" value="ECO:0007669"/>
    <property type="project" value="UniProtKB-SubCell"/>
</dbReference>
<dbReference type="GO" id="GO:0051500">
    <property type="term" value="F:D-tyrosyl-tRNA(Tyr) deacylase activity"/>
    <property type="evidence" value="ECO:0007669"/>
    <property type="project" value="TreeGrafter"/>
</dbReference>
<dbReference type="GO" id="GO:0106026">
    <property type="term" value="F:Gly-tRNA(Ala) deacylase activity"/>
    <property type="evidence" value="ECO:0007669"/>
    <property type="project" value="UniProtKB-UniRule"/>
</dbReference>
<dbReference type="GO" id="GO:0043908">
    <property type="term" value="F:Ser(Gly)-tRNA(Ala) hydrolase activity"/>
    <property type="evidence" value="ECO:0007669"/>
    <property type="project" value="UniProtKB-UniRule"/>
</dbReference>
<dbReference type="GO" id="GO:0000049">
    <property type="term" value="F:tRNA binding"/>
    <property type="evidence" value="ECO:0007669"/>
    <property type="project" value="UniProtKB-UniRule"/>
</dbReference>
<dbReference type="GO" id="GO:0019478">
    <property type="term" value="P:D-amino acid catabolic process"/>
    <property type="evidence" value="ECO:0007669"/>
    <property type="project" value="UniProtKB-UniRule"/>
</dbReference>
<dbReference type="CDD" id="cd00563">
    <property type="entry name" value="Dtyr_deacylase"/>
    <property type="match status" value="1"/>
</dbReference>
<dbReference type="FunFam" id="3.50.80.10:FF:000001">
    <property type="entry name" value="D-aminoacyl-tRNA deacylase"/>
    <property type="match status" value="1"/>
</dbReference>
<dbReference type="Gene3D" id="3.50.80.10">
    <property type="entry name" value="D-tyrosyl-tRNA(Tyr) deacylase"/>
    <property type="match status" value="1"/>
</dbReference>
<dbReference type="HAMAP" id="MF_00518">
    <property type="entry name" value="Deacylase_Dtd"/>
    <property type="match status" value="1"/>
</dbReference>
<dbReference type="InterPro" id="IPR003732">
    <property type="entry name" value="Daa-tRNA_deacyls_DTD"/>
</dbReference>
<dbReference type="InterPro" id="IPR023509">
    <property type="entry name" value="DTD-like_sf"/>
</dbReference>
<dbReference type="NCBIfam" id="TIGR00256">
    <property type="entry name" value="D-aminoacyl-tRNA deacylase"/>
    <property type="match status" value="1"/>
</dbReference>
<dbReference type="PANTHER" id="PTHR10472:SF5">
    <property type="entry name" value="D-AMINOACYL-TRNA DEACYLASE 1"/>
    <property type="match status" value="1"/>
</dbReference>
<dbReference type="PANTHER" id="PTHR10472">
    <property type="entry name" value="D-TYROSYL-TRNA TYR DEACYLASE"/>
    <property type="match status" value="1"/>
</dbReference>
<dbReference type="Pfam" id="PF02580">
    <property type="entry name" value="Tyr_Deacylase"/>
    <property type="match status" value="1"/>
</dbReference>
<dbReference type="SUPFAM" id="SSF69500">
    <property type="entry name" value="DTD-like"/>
    <property type="match status" value="1"/>
</dbReference>
<keyword id="KW-0963">Cytoplasm</keyword>
<keyword id="KW-0378">Hydrolase</keyword>
<keyword id="KW-0694">RNA-binding</keyword>
<keyword id="KW-0820">tRNA-binding</keyword>
<sequence length="150" mass="16923">MRAVVQRVNSANVDVNGKIIGKIKKGLLVLLGVGKNDTESDAEYLVNKILNLRIFDDNKGKMNLSLLDIKGDILIVSQFTLYGDCRRGRRPSYSDSASPEKAKKLYEYFVEKIRKEYNIKVETGEFGAYMKVNLENDGPVTLLLDSKKVF</sequence>
<reference key="1">
    <citation type="submission" date="2007-05" db="EMBL/GenBank/DDBJ databases">
        <title>Complete sequence of Thermosipho melanesiensis BI429.</title>
        <authorList>
            <consortium name="US DOE Joint Genome Institute"/>
            <person name="Copeland A."/>
            <person name="Lucas S."/>
            <person name="Lapidus A."/>
            <person name="Barry K."/>
            <person name="Glavina del Rio T."/>
            <person name="Dalin E."/>
            <person name="Tice H."/>
            <person name="Pitluck S."/>
            <person name="Chertkov O."/>
            <person name="Brettin T."/>
            <person name="Bruce D."/>
            <person name="Detter J.C."/>
            <person name="Han C."/>
            <person name="Schmutz J."/>
            <person name="Larimer F."/>
            <person name="Land M."/>
            <person name="Hauser L."/>
            <person name="Kyrpides N."/>
            <person name="Mikhailova N."/>
            <person name="Nelson K."/>
            <person name="Gogarten J.P."/>
            <person name="Noll K."/>
            <person name="Richardson P."/>
        </authorList>
    </citation>
    <scope>NUCLEOTIDE SEQUENCE [LARGE SCALE GENOMIC DNA]</scope>
    <source>
        <strain>DSM 12029 / CIP 104789 / BI429</strain>
    </source>
</reference>
<comment type="function">
    <text evidence="1">An aminoacyl-tRNA editing enzyme that deacylates mischarged D-aminoacyl-tRNAs. Also deacylates mischarged glycyl-tRNA(Ala), protecting cells against glycine mischarging by AlaRS. Acts via tRNA-based rather than protein-based catalysis; rejects L-amino acids rather than detecting D-amino acids in the active site. By recycling D-aminoacyl-tRNA to D-amino acids and free tRNA molecules, this enzyme counteracts the toxicity associated with the formation of D-aminoacyl-tRNA entities in vivo and helps enforce protein L-homochirality.</text>
</comment>
<comment type="catalytic activity">
    <reaction evidence="1">
        <text>glycyl-tRNA(Ala) + H2O = tRNA(Ala) + glycine + H(+)</text>
        <dbReference type="Rhea" id="RHEA:53744"/>
        <dbReference type="Rhea" id="RHEA-COMP:9657"/>
        <dbReference type="Rhea" id="RHEA-COMP:13640"/>
        <dbReference type="ChEBI" id="CHEBI:15377"/>
        <dbReference type="ChEBI" id="CHEBI:15378"/>
        <dbReference type="ChEBI" id="CHEBI:57305"/>
        <dbReference type="ChEBI" id="CHEBI:78442"/>
        <dbReference type="ChEBI" id="CHEBI:78522"/>
        <dbReference type="EC" id="3.1.1.96"/>
    </reaction>
</comment>
<comment type="catalytic activity">
    <reaction evidence="1">
        <text>a D-aminoacyl-tRNA + H2O = a tRNA + a D-alpha-amino acid + H(+)</text>
        <dbReference type="Rhea" id="RHEA:13953"/>
        <dbReference type="Rhea" id="RHEA-COMP:10123"/>
        <dbReference type="Rhea" id="RHEA-COMP:10124"/>
        <dbReference type="ChEBI" id="CHEBI:15377"/>
        <dbReference type="ChEBI" id="CHEBI:15378"/>
        <dbReference type="ChEBI" id="CHEBI:59871"/>
        <dbReference type="ChEBI" id="CHEBI:78442"/>
        <dbReference type="ChEBI" id="CHEBI:79333"/>
        <dbReference type="EC" id="3.1.1.96"/>
    </reaction>
</comment>
<comment type="subunit">
    <text evidence="1">Homodimer.</text>
</comment>
<comment type="subcellular location">
    <subcellularLocation>
        <location evidence="1">Cytoplasm</location>
    </subcellularLocation>
</comment>
<comment type="domain">
    <text evidence="1">A Gly-cisPro motif from one monomer fits into the active site of the other monomer to allow specific chiral rejection of L-amino acids.</text>
</comment>
<comment type="similarity">
    <text evidence="1">Belongs to the DTD family.</text>
</comment>